<accession>C5BRH1</accession>
<comment type="function">
    <text evidence="1">Required for the first step of histidine biosynthesis. May allow the feedback regulation of ATP phosphoribosyltransferase activity by histidine.</text>
</comment>
<comment type="pathway">
    <text evidence="1">Amino-acid biosynthesis; L-histidine biosynthesis; L-histidine from 5-phospho-alpha-D-ribose 1-diphosphate: step 1/9.</text>
</comment>
<comment type="subunit">
    <text evidence="1">Heteromultimer composed of HisG and HisZ subunits.</text>
</comment>
<comment type="subcellular location">
    <subcellularLocation>
        <location evidence="1">Cytoplasm</location>
    </subcellularLocation>
</comment>
<comment type="miscellaneous">
    <text>This function is generally fulfilled by the C-terminal part of HisG, which is missing in some bacteria such as this one.</text>
</comment>
<comment type="similarity">
    <text evidence="1">Belongs to the class-II aminoacyl-tRNA synthetase family. HisZ subfamily.</text>
</comment>
<keyword id="KW-0028">Amino-acid biosynthesis</keyword>
<keyword id="KW-0963">Cytoplasm</keyword>
<keyword id="KW-0368">Histidine biosynthesis</keyword>
<keyword id="KW-1185">Reference proteome</keyword>
<reference key="1">
    <citation type="journal article" date="2009" name="PLoS ONE">
        <title>The complete genome of Teredinibacter turnerae T7901: an intracellular endosymbiont of marine wood-boring bivalves (shipworms).</title>
        <authorList>
            <person name="Yang J.C."/>
            <person name="Madupu R."/>
            <person name="Durkin A.S."/>
            <person name="Ekborg N.A."/>
            <person name="Pedamallu C.S."/>
            <person name="Hostetler J.B."/>
            <person name="Radune D."/>
            <person name="Toms B.S."/>
            <person name="Henrissat B."/>
            <person name="Coutinho P.M."/>
            <person name="Schwarz S."/>
            <person name="Field L."/>
            <person name="Trindade-Silva A.E."/>
            <person name="Soares C.A.G."/>
            <person name="Elshahawi S."/>
            <person name="Hanora A."/>
            <person name="Schmidt E.W."/>
            <person name="Haygood M.G."/>
            <person name="Posfai J."/>
            <person name="Benner J."/>
            <person name="Madinger C."/>
            <person name="Nove J."/>
            <person name="Anton B."/>
            <person name="Chaudhary K."/>
            <person name="Foster J."/>
            <person name="Holman A."/>
            <person name="Kumar S."/>
            <person name="Lessard P.A."/>
            <person name="Luyten Y.A."/>
            <person name="Slatko B."/>
            <person name="Wood N."/>
            <person name="Wu B."/>
            <person name="Teplitski M."/>
            <person name="Mougous J.D."/>
            <person name="Ward N."/>
            <person name="Eisen J.A."/>
            <person name="Badger J.H."/>
            <person name="Distel D.L."/>
        </authorList>
    </citation>
    <scope>NUCLEOTIDE SEQUENCE [LARGE SCALE GENOMIC DNA]</scope>
    <source>
        <strain>ATCC 39867 / T7901</strain>
    </source>
</reference>
<proteinExistence type="inferred from homology"/>
<gene>
    <name evidence="1" type="primary">hisZ</name>
    <name type="ordered locus">TERTU_3552</name>
</gene>
<protein>
    <recommendedName>
        <fullName evidence="1">ATP phosphoribosyltransferase regulatory subunit</fullName>
    </recommendedName>
</protein>
<sequence>MSKVDRWLLPEGISELLPDDALQVETLRRRLVDVFQRWGYEYVITPMIEFTDSLLTGSGGDIDLLTFKLTDQLTGKTLGIRADITPQAARMDAHSLKRSGANRLCYAGHVVHTRPQVALGSRTPIQVGVELFGEPGLDADIEVISLLLEVLSLVGMPKQYLDIGHVGVFRALTEAAGFSKEQENTLFLLLQAKAATEIKDWVTTHVREPKLQHWFLELPKLSGSAGVLDRARDVFADAPAEVMVALDELSSIADVVQPRYPDAQLYFDLSELRGYHYHTGIVFGAFSPGVGNAIAKGGRYDHIGEAFGRARPATGFAADLSVICRTLNVETAPPNPGVFAPASTNAAQWQEIQSLREAGERVVSGLSIQDAPYDHQNCDRILIETDTGFQVKAL</sequence>
<evidence type="ECO:0000255" key="1">
    <source>
        <dbReference type="HAMAP-Rule" id="MF_00125"/>
    </source>
</evidence>
<dbReference type="EMBL" id="CP001614">
    <property type="protein sequence ID" value="ACR11239.1"/>
    <property type="molecule type" value="Genomic_DNA"/>
</dbReference>
<dbReference type="RefSeq" id="WP_015817351.1">
    <property type="nucleotide sequence ID" value="NC_012997.1"/>
</dbReference>
<dbReference type="SMR" id="C5BRH1"/>
<dbReference type="STRING" id="377629.TERTU_3552"/>
<dbReference type="KEGG" id="ttu:TERTU_3552"/>
<dbReference type="eggNOG" id="COG3705">
    <property type="taxonomic scope" value="Bacteria"/>
</dbReference>
<dbReference type="HOGENOM" id="CLU_025113_0_1_6"/>
<dbReference type="OrthoDB" id="9769617at2"/>
<dbReference type="UniPathway" id="UPA00031">
    <property type="reaction ID" value="UER00006"/>
</dbReference>
<dbReference type="Proteomes" id="UP000009080">
    <property type="component" value="Chromosome"/>
</dbReference>
<dbReference type="GO" id="GO:0005737">
    <property type="term" value="C:cytoplasm"/>
    <property type="evidence" value="ECO:0007669"/>
    <property type="project" value="UniProtKB-SubCell"/>
</dbReference>
<dbReference type="GO" id="GO:0004821">
    <property type="term" value="F:histidine-tRNA ligase activity"/>
    <property type="evidence" value="ECO:0007669"/>
    <property type="project" value="TreeGrafter"/>
</dbReference>
<dbReference type="GO" id="GO:0006427">
    <property type="term" value="P:histidyl-tRNA aminoacylation"/>
    <property type="evidence" value="ECO:0007669"/>
    <property type="project" value="TreeGrafter"/>
</dbReference>
<dbReference type="GO" id="GO:0000105">
    <property type="term" value="P:L-histidine biosynthetic process"/>
    <property type="evidence" value="ECO:0007669"/>
    <property type="project" value="UniProtKB-UniRule"/>
</dbReference>
<dbReference type="CDD" id="cd00773">
    <property type="entry name" value="HisRS-like_core"/>
    <property type="match status" value="1"/>
</dbReference>
<dbReference type="Gene3D" id="3.30.930.10">
    <property type="entry name" value="Bira Bifunctional Protein, Domain 2"/>
    <property type="match status" value="1"/>
</dbReference>
<dbReference type="HAMAP" id="MF_00125">
    <property type="entry name" value="HisZ"/>
    <property type="match status" value="1"/>
</dbReference>
<dbReference type="InterPro" id="IPR045864">
    <property type="entry name" value="aa-tRNA-synth_II/BPL/LPL"/>
</dbReference>
<dbReference type="InterPro" id="IPR041715">
    <property type="entry name" value="HisRS-like_core"/>
</dbReference>
<dbReference type="InterPro" id="IPR004516">
    <property type="entry name" value="HisRS/HisZ"/>
</dbReference>
<dbReference type="InterPro" id="IPR004517">
    <property type="entry name" value="HisZ"/>
</dbReference>
<dbReference type="NCBIfam" id="TIGR00443">
    <property type="entry name" value="hisZ_biosyn_reg"/>
    <property type="match status" value="1"/>
</dbReference>
<dbReference type="NCBIfam" id="NF008935">
    <property type="entry name" value="PRK12292.1-1"/>
    <property type="match status" value="1"/>
</dbReference>
<dbReference type="NCBIfam" id="NF009086">
    <property type="entry name" value="PRK12421.1"/>
    <property type="match status" value="1"/>
</dbReference>
<dbReference type="PANTHER" id="PTHR43707:SF1">
    <property type="entry name" value="HISTIDINE--TRNA LIGASE, MITOCHONDRIAL-RELATED"/>
    <property type="match status" value="1"/>
</dbReference>
<dbReference type="PANTHER" id="PTHR43707">
    <property type="entry name" value="HISTIDYL-TRNA SYNTHETASE"/>
    <property type="match status" value="1"/>
</dbReference>
<dbReference type="Pfam" id="PF13393">
    <property type="entry name" value="tRNA-synt_His"/>
    <property type="match status" value="1"/>
</dbReference>
<dbReference type="PIRSF" id="PIRSF001549">
    <property type="entry name" value="His-tRNA_synth"/>
    <property type="match status" value="1"/>
</dbReference>
<dbReference type="SUPFAM" id="SSF55681">
    <property type="entry name" value="Class II aaRS and biotin synthetases"/>
    <property type="match status" value="1"/>
</dbReference>
<name>HISZ_TERTT</name>
<feature type="chain" id="PRO_1000203118" description="ATP phosphoribosyltransferase regulatory subunit">
    <location>
        <begin position="1"/>
        <end position="394"/>
    </location>
</feature>
<organism>
    <name type="scientific">Teredinibacter turnerae (strain ATCC 39867 / T7901)</name>
    <dbReference type="NCBI Taxonomy" id="377629"/>
    <lineage>
        <taxon>Bacteria</taxon>
        <taxon>Pseudomonadati</taxon>
        <taxon>Pseudomonadota</taxon>
        <taxon>Gammaproteobacteria</taxon>
        <taxon>Cellvibrionales</taxon>
        <taxon>Cellvibrionaceae</taxon>
        <taxon>Teredinibacter</taxon>
    </lineage>
</organism>